<dbReference type="EC" id="2.1.2.11" evidence="1"/>
<dbReference type="EMBL" id="DP000238">
    <property type="protein sequence ID" value="ABK78122.1"/>
    <property type="molecule type" value="Genomic_DNA"/>
</dbReference>
<dbReference type="SMR" id="A0RXQ5"/>
<dbReference type="STRING" id="414004.CENSYa_1500"/>
<dbReference type="EnsemblBacteria" id="ABK78122">
    <property type="protein sequence ID" value="ABK78122"/>
    <property type="gene ID" value="CENSYa_1500"/>
</dbReference>
<dbReference type="KEGG" id="csy:CENSYa_1500"/>
<dbReference type="PATRIC" id="fig|414004.10.peg.1375"/>
<dbReference type="HOGENOM" id="CLU_036645_1_0_2"/>
<dbReference type="UniPathway" id="UPA00241"/>
<dbReference type="Proteomes" id="UP000000758">
    <property type="component" value="Chromosome"/>
</dbReference>
<dbReference type="GO" id="GO:0005737">
    <property type="term" value="C:cytoplasm"/>
    <property type="evidence" value="ECO:0007669"/>
    <property type="project" value="UniProtKB-SubCell"/>
</dbReference>
<dbReference type="GO" id="GO:0003864">
    <property type="term" value="F:3-methyl-2-oxobutanoate hydroxymethyltransferase activity"/>
    <property type="evidence" value="ECO:0007669"/>
    <property type="project" value="UniProtKB-UniRule"/>
</dbReference>
<dbReference type="GO" id="GO:0000287">
    <property type="term" value="F:magnesium ion binding"/>
    <property type="evidence" value="ECO:0007669"/>
    <property type="project" value="TreeGrafter"/>
</dbReference>
<dbReference type="GO" id="GO:0015937">
    <property type="term" value="P:coenzyme A biosynthetic process"/>
    <property type="evidence" value="ECO:0007669"/>
    <property type="project" value="UniProtKB-UniRule"/>
</dbReference>
<dbReference type="GO" id="GO:0015940">
    <property type="term" value="P:pantothenate biosynthetic process"/>
    <property type="evidence" value="ECO:0007669"/>
    <property type="project" value="InterPro"/>
</dbReference>
<dbReference type="CDD" id="cd06557">
    <property type="entry name" value="KPHMT-like"/>
    <property type="match status" value="1"/>
</dbReference>
<dbReference type="FunFam" id="3.20.20.60:FF:000003">
    <property type="entry name" value="3-methyl-2-oxobutanoate hydroxymethyltransferase"/>
    <property type="match status" value="1"/>
</dbReference>
<dbReference type="Gene3D" id="3.20.20.60">
    <property type="entry name" value="Phosphoenolpyruvate-binding domains"/>
    <property type="match status" value="1"/>
</dbReference>
<dbReference type="HAMAP" id="MF_00156">
    <property type="entry name" value="PanB"/>
    <property type="match status" value="1"/>
</dbReference>
<dbReference type="InterPro" id="IPR003700">
    <property type="entry name" value="Pantoate_hydroxy_MeTrfase"/>
</dbReference>
<dbReference type="InterPro" id="IPR015813">
    <property type="entry name" value="Pyrv/PenolPyrv_kinase-like_dom"/>
</dbReference>
<dbReference type="InterPro" id="IPR040442">
    <property type="entry name" value="Pyrv_kinase-like_dom_sf"/>
</dbReference>
<dbReference type="NCBIfam" id="TIGR00222">
    <property type="entry name" value="panB"/>
    <property type="match status" value="1"/>
</dbReference>
<dbReference type="NCBIfam" id="NF001452">
    <property type="entry name" value="PRK00311.1"/>
    <property type="match status" value="1"/>
</dbReference>
<dbReference type="PANTHER" id="PTHR20881">
    <property type="entry name" value="3-METHYL-2-OXOBUTANOATE HYDROXYMETHYLTRANSFERASE"/>
    <property type="match status" value="1"/>
</dbReference>
<dbReference type="PANTHER" id="PTHR20881:SF0">
    <property type="entry name" value="3-METHYL-2-OXOBUTANOATE HYDROXYMETHYLTRANSFERASE"/>
    <property type="match status" value="1"/>
</dbReference>
<dbReference type="Pfam" id="PF02548">
    <property type="entry name" value="Pantoate_transf"/>
    <property type="match status" value="1"/>
</dbReference>
<dbReference type="PIRSF" id="PIRSF000388">
    <property type="entry name" value="Pantoate_hydroxy_MeTrfase"/>
    <property type="match status" value="1"/>
</dbReference>
<dbReference type="SUPFAM" id="SSF51621">
    <property type="entry name" value="Phosphoenolpyruvate/pyruvate domain"/>
    <property type="match status" value="1"/>
</dbReference>
<protein>
    <recommendedName>
        <fullName evidence="1">3-methyl-2-oxobutanoate hydroxymethyltransferase</fullName>
        <ecNumber evidence="1">2.1.2.11</ecNumber>
    </recommendedName>
    <alternativeName>
        <fullName evidence="1">Ketopantoate hydroxymethyltransferase</fullName>
        <shortName evidence="1">KPHMT</shortName>
    </alternativeName>
</protein>
<proteinExistence type="inferred from homology"/>
<accession>A0RXQ5</accession>
<feature type="chain" id="PRO_0000297420" description="3-methyl-2-oxobutanoate hydroxymethyltransferase">
    <location>
        <begin position="1"/>
        <end position="262"/>
    </location>
</feature>
<feature type="active site" description="Proton acceptor" evidence="1">
    <location>
        <position position="168"/>
    </location>
</feature>
<feature type="binding site" evidence="1">
    <location>
        <begin position="31"/>
        <end position="32"/>
    </location>
    <ligand>
        <name>3-methyl-2-oxobutanoate</name>
        <dbReference type="ChEBI" id="CHEBI:11851"/>
    </ligand>
</feature>
<feature type="binding site" evidence="1">
    <location>
        <position position="31"/>
    </location>
    <ligand>
        <name>Mg(2+)</name>
        <dbReference type="ChEBI" id="CHEBI:18420"/>
    </ligand>
</feature>
<feature type="binding site" evidence="1">
    <location>
        <position position="70"/>
    </location>
    <ligand>
        <name>3-methyl-2-oxobutanoate</name>
        <dbReference type="ChEBI" id="CHEBI:11851"/>
    </ligand>
</feature>
<feature type="binding site" evidence="1">
    <location>
        <position position="70"/>
    </location>
    <ligand>
        <name>Mg(2+)</name>
        <dbReference type="ChEBI" id="CHEBI:18420"/>
    </ligand>
</feature>
<feature type="binding site" evidence="1">
    <location>
        <position position="99"/>
    </location>
    <ligand>
        <name>3-methyl-2-oxobutanoate</name>
        <dbReference type="ChEBI" id="CHEBI:11851"/>
    </ligand>
</feature>
<feature type="binding site" evidence="1">
    <location>
        <position position="101"/>
    </location>
    <ligand>
        <name>Mg(2+)</name>
        <dbReference type="ChEBI" id="CHEBI:18420"/>
    </ligand>
</feature>
<organism>
    <name type="scientific">Cenarchaeum symbiosum (strain A)</name>
    <dbReference type="NCBI Taxonomy" id="414004"/>
    <lineage>
        <taxon>Archaea</taxon>
        <taxon>Nitrososphaerota</taxon>
        <taxon>Candidatus Cenarchaeales</taxon>
        <taxon>Candidatus Cenarchaeaceae</taxon>
        <taxon>Candidatus Cenarchaeum</taxon>
    </lineage>
</organism>
<name>PANB_CENSY</name>
<evidence type="ECO:0000255" key="1">
    <source>
        <dbReference type="HAMAP-Rule" id="MF_00156"/>
    </source>
</evidence>
<gene>
    <name evidence="1" type="primary">panB</name>
    <name type="ordered locus">CENSYa_1500</name>
</gene>
<reference key="1">
    <citation type="journal article" date="2006" name="Proc. Natl. Acad. Sci. U.S.A.">
        <title>Genomic analysis of the uncultivated marine crenarchaeote Cenarchaeum symbiosum.</title>
        <authorList>
            <person name="Hallam S.J."/>
            <person name="Konstantinidis K.T."/>
            <person name="Putnam N."/>
            <person name="Schleper C."/>
            <person name="Watanabe Y."/>
            <person name="Sugahara J."/>
            <person name="Preston C."/>
            <person name="de la Torre J."/>
            <person name="Richardson P.M."/>
            <person name="DeLong E.F."/>
        </authorList>
    </citation>
    <scope>NUCLEOTIDE SEQUENCE [LARGE SCALE GENOMIC DNA]</scope>
    <source>
        <strain>A</strain>
    </source>
</reference>
<comment type="function">
    <text evidence="1">Catalyzes the reversible reaction in which hydroxymethyl group from 5,10-methylenetetrahydrofolate is transferred onto alpha-ketoisovalerate to form ketopantoate.</text>
</comment>
<comment type="catalytic activity">
    <reaction evidence="1">
        <text>3-methyl-2-oxobutanoate + (6R)-5,10-methylene-5,6,7,8-tetrahydrofolate + H2O = 2-dehydropantoate + (6S)-5,6,7,8-tetrahydrofolate</text>
        <dbReference type="Rhea" id="RHEA:11824"/>
        <dbReference type="ChEBI" id="CHEBI:11561"/>
        <dbReference type="ChEBI" id="CHEBI:11851"/>
        <dbReference type="ChEBI" id="CHEBI:15377"/>
        <dbReference type="ChEBI" id="CHEBI:15636"/>
        <dbReference type="ChEBI" id="CHEBI:57453"/>
        <dbReference type="EC" id="2.1.2.11"/>
    </reaction>
</comment>
<comment type="cofactor">
    <cofactor evidence="1">
        <name>Mg(2+)</name>
        <dbReference type="ChEBI" id="CHEBI:18420"/>
    </cofactor>
    <text evidence="1">Binds 1 Mg(2+) ion per subunit.</text>
</comment>
<comment type="pathway">
    <text evidence="1">Cofactor biosynthesis; coenzyme A biosynthesis.</text>
</comment>
<comment type="subunit">
    <text evidence="1">Homodecamer; pentamer of dimers.</text>
</comment>
<comment type="subcellular location">
    <subcellularLocation>
        <location evidence="1">Cytoplasm</location>
    </subcellularLocation>
</comment>
<comment type="similarity">
    <text evidence="1">Belongs to the PanB family.</text>
</comment>
<sequence length="262" mass="27197">MKGSEKITVVACYDYSMAALCDGADMLLVGDSAGMVVLGYDSTTRVTMDEMCLFTGAVSRGRKDSMVVGDLPFMSYQACTADAIRNSGRLVRAGADAVKLEGGAAVADAVRGVTGAGIPVMGHIGLLPQTAALSGGYRVQGRTRESALRLAEDAKALEEAGAFAIVLEMVAEEAARMVTKSVGVPTIGIGSGAGCDGQVLVLHDMLGLYGRFRPKFAKVYADLSGEVAGAVAGFKAEVESSQFPRPENSFYMDAGEADGLDR</sequence>
<keyword id="KW-0173">Coenzyme A biosynthesis</keyword>
<keyword id="KW-0963">Cytoplasm</keyword>
<keyword id="KW-0460">Magnesium</keyword>
<keyword id="KW-0479">Metal-binding</keyword>
<keyword id="KW-1185">Reference proteome</keyword>
<keyword id="KW-0808">Transferase</keyword>